<evidence type="ECO:0000255" key="1">
    <source>
        <dbReference type="HAMAP-Rule" id="MF_01341"/>
    </source>
</evidence>
<evidence type="ECO:0000256" key="2">
    <source>
        <dbReference type="SAM" id="MobiDB-lite"/>
    </source>
</evidence>
<evidence type="ECO:0000305" key="3"/>
<evidence type="ECO:0007829" key="4">
    <source>
        <dbReference type="PDB" id="8A57"/>
    </source>
</evidence>
<evidence type="ECO:0007829" key="5">
    <source>
        <dbReference type="PDB" id="8A5I"/>
    </source>
</evidence>
<evidence type="ECO:0007829" key="6">
    <source>
        <dbReference type="PDB" id="8A63"/>
    </source>
</evidence>
<sequence>MKLHELKPSEGSRKERNRVGRGTGSGNGKTSGRGHKGQKARSGGGVRLGFEGGQLPLFRRIPKRGFTNINRKEFAIVNLDVLNRFEDGTEVTPELLVETGIIRNEKSGIKILSNGNIEKKLTVKANKFSAAAKEAIEAAGGKTEVI</sequence>
<comment type="function">
    <text evidence="1">Binds to the 23S rRNA.</text>
</comment>
<comment type="subunit">
    <text evidence="1">Part of the 50S ribosomal subunit.</text>
</comment>
<comment type="similarity">
    <text evidence="1">Belongs to the universal ribosomal protein uL15 family.</text>
</comment>
<reference key="1">
    <citation type="journal article" date="2001" name="Science">
        <title>Comparative genomics of Listeria species.</title>
        <authorList>
            <person name="Glaser P."/>
            <person name="Frangeul L."/>
            <person name="Buchrieser C."/>
            <person name="Rusniok C."/>
            <person name="Amend A."/>
            <person name="Baquero F."/>
            <person name="Berche P."/>
            <person name="Bloecker H."/>
            <person name="Brandt P."/>
            <person name="Chakraborty T."/>
            <person name="Charbit A."/>
            <person name="Chetouani F."/>
            <person name="Couve E."/>
            <person name="de Daruvar A."/>
            <person name="Dehoux P."/>
            <person name="Domann E."/>
            <person name="Dominguez-Bernal G."/>
            <person name="Duchaud E."/>
            <person name="Durant L."/>
            <person name="Dussurget O."/>
            <person name="Entian K.-D."/>
            <person name="Fsihi H."/>
            <person name="Garcia-del Portillo F."/>
            <person name="Garrido P."/>
            <person name="Gautier L."/>
            <person name="Goebel W."/>
            <person name="Gomez-Lopez N."/>
            <person name="Hain T."/>
            <person name="Hauf J."/>
            <person name="Jackson D."/>
            <person name="Jones L.-M."/>
            <person name="Kaerst U."/>
            <person name="Kreft J."/>
            <person name="Kuhn M."/>
            <person name="Kunst F."/>
            <person name="Kurapkat G."/>
            <person name="Madueno E."/>
            <person name="Maitournam A."/>
            <person name="Mata Vicente J."/>
            <person name="Ng E."/>
            <person name="Nedjari H."/>
            <person name="Nordsiek G."/>
            <person name="Novella S."/>
            <person name="de Pablos B."/>
            <person name="Perez-Diaz J.-C."/>
            <person name="Purcell R."/>
            <person name="Remmel B."/>
            <person name="Rose M."/>
            <person name="Schlueter T."/>
            <person name="Simoes N."/>
            <person name="Tierrez A."/>
            <person name="Vazquez-Boland J.-A."/>
            <person name="Voss H."/>
            <person name="Wehland J."/>
            <person name="Cossart P."/>
        </authorList>
    </citation>
    <scope>NUCLEOTIDE SEQUENCE [LARGE SCALE GENOMIC DNA]</scope>
    <source>
        <strain>ATCC BAA-679 / EGD-e</strain>
    </source>
</reference>
<name>RL15_LISMO</name>
<accession>Q8Y447</accession>
<feature type="chain" id="PRO_0000104746" description="Large ribosomal subunit protein uL15">
    <location>
        <begin position="1"/>
        <end position="146"/>
    </location>
</feature>
<feature type="region of interest" description="Disordered" evidence="2">
    <location>
        <begin position="1"/>
        <end position="50"/>
    </location>
</feature>
<feature type="compositionally biased region" description="Basic and acidic residues" evidence="2">
    <location>
        <begin position="1"/>
        <end position="18"/>
    </location>
</feature>
<feature type="compositionally biased region" description="Gly residues" evidence="2">
    <location>
        <begin position="21"/>
        <end position="31"/>
    </location>
</feature>
<feature type="helix" evidence="4">
    <location>
        <begin position="23"/>
        <end position="25"/>
    </location>
</feature>
<feature type="turn" evidence="4">
    <location>
        <begin position="29"/>
        <end position="32"/>
    </location>
</feature>
<feature type="strand" evidence="4">
    <location>
        <begin position="35"/>
        <end position="37"/>
    </location>
</feature>
<feature type="helix" evidence="4">
    <location>
        <begin position="38"/>
        <end position="40"/>
    </location>
</feature>
<feature type="helix" evidence="4">
    <location>
        <begin position="57"/>
        <end position="60"/>
    </location>
</feature>
<feature type="strand" evidence="4">
    <location>
        <begin position="75"/>
        <end position="78"/>
    </location>
</feature>
<feature type="helix" evidence="4">
    <location>
        <begin position="79"/>
        <end position="84"/>
    </location>
</feature>
<feature type="strand" evidence="6">
    <location>
        <begin position="89"/>
        <end position="91"/>
    </location>
</feature>
<feature type="helix" evidence="4">
    <location>
        <begin position="93"/>
        <end position="98"/>
    </location>
</feature>
<feature type="strand" evidence="4">
    <location>
        <begin position="109"/>
        <end position="112"/>
    </location>
</feature>
<feature type="strand" evidence="4">
    <location>
        <begin position="122"/>
        <end position="128"/>
    </location>
</feature>
<feature type="helix" evidence="4">
    <location>
        <begin position="130"/>
        <end position="139"/>
    </location>
</feature>
<feature type="strand" evidence="5">
    <location>
        <begin position="142"/>
        <end position="145"/>
    </location>
</feature>
<organism>
    <name type="scientific">Listeria monocytogenes serovar 1/2a (strain ATCC BAA-679 / EGD-e)</name>
    <dbReference type="NCBI Taxonomy" id="169963"/>
    <lineage>
        <taxon>Bacteria</taxon>
        <taxon>Bacillati</taxon>
        <taxon>Bacillota</taxon>
        <taxon>Bacilli</taxon>
        <taxon>Bacillales</taxon>
        <taxon>Listeriaceae</taxon>
        <taxon>Listeria</taxon>
    </lineage>
</organism>
<protein>
    <recommendedName>
        <fullName evidence="1">Large ribosomal subunit protein uL15</fullName>
    </recommendedName>
    <alternativeName>
        <fullName evidence="3">50S ribosomal protein L15</fullName>
    </alternativeName>
</protein>
<proteinExistence type="evidence at protein level"/>
<keyword id="KW-0002">3D-structure</keyword>
<keyword id="KW-1185">Reference proteome</keyword>
<keyword id="KW-0687">Ribonucleoprotein</keyword>
<keyword id="KW-0689">Ribosomal protein</keyword>
<keyword id="KW-0694">RNA-binding</keyword>
<keyword id="KW-0699">rRNA-binding</keyword>
<gene>
    <name evidence="1" type="primary">rplO</name>
    <name type="ordered locus">lmo2613</name>
</gene>
<dbReference type="EMBL" id="AL591983">
    <property type="protein sequence ID" value="CAD00691.1"/>
    <property type="molecule type" value="Genomic_DNA"/>
</dbReference>
<dbReference type="PIR" id="AE1401">
    <property type="entry name" value="AE1401"/>
</dbReference>
<dbReference type="RefSeq" id="NP_466136.1">
    <property type="nucleotide sequence ID" value="NC_003210.1"/>
</dbReference>
<dbReference type="RefSeq" id="WP_003723680.1">
    <property type="nucleotide sequence ID" value="NZ_CP149495.1"/>
</dbReference>
<dbReference type="PDB" id="7NHN">
    <property type="method" value="EM"/>
    <property type="resolution" value="2.90 A"/>
    <property type="chains" value="O=1-146"/>
</dbReference>
<dbReference type="PDB" id="8A57">
    <property type="method" value="EM"/>
    <property type="resolution" value="2.30 A"/>
    <property type="chains" value="O=1-146"/>
</dbReference>
<dbReference type="PDB" id="8A5I">
    <property type="method" value="EM"/>
    <property type="resolution" value="2.30 A"/>
    <property type="chains" value="O=1-146"/>
</dbReference>
<dbReference type="PDB" id="8A63">
    <property type="method" value="EM"/>
    <property type="resolution" value="3.10 A"/>
    <property type="chains" value="O=1-146"/>
</dbReference>
<dbReference type="PDBsum" id="7NHN"/>
<dbReference type="PDBsum" id="8A57"/>
<dbReference type="PDBsum" id="8A5I"/>
<dbReference type="PDBsum" id="8A63"/>
<dbReference type="EMDB" id="EMD-12334"/>
<dbReference type="EMDB" id="EMD-15161"/>
<dbReference type="EMDB" id="EMD-15175"/>
<dbReference type="EMDB" id="EMD-15204"/>
<dbReference type="SMR" id="Q8Y447"/>
<dbReference type="STRING" id="169963.gene:17595331"/>
<dbReference type="PaxDb" id="169963-lmo2613"/>
<dbReference type="EnsemblBacteria" id="CAD00691">
    <property type="protein sequence ID" value="CAD00691"/>
    <property type="gene ID" value="CAD00691"/>
</dbReference>
<dbReference type="GeneID" id="93240494"/>
<dbReference type="GeneID" id="987200"/>
<dbReference type="KEGG" id="lmo:lmo2613"/>
<dbReference type="PATRIC" id="fig|169963.11.peg.2677"/>
<dbReference type="eggNOG" id="COG0200">
    <property type="taxonomic scope" value="Bacteria"/>
</dbReference>
<dbReference type="HOGENOM" id="CLU_055188_4_2_9"/>
<dbReference type="OrthoDB" id="9810293at2"/>
<dbReference type="PhylomeDB" id="Q8Y447"/>
<dbReference type="BioCyc" id="LMON169963:LMO2613-MONOMER"/>
<dbReference type="Proteomes" id="UP000000817">
    <property type="component" value="Chromosome"/>
</dbReference>
<dbReference type="GO" id="GO:0022625">
    <property type="term" value="C:cytosolic large ribosomal subunit"/>
    <property type="evidence" value="ECO:0000318"/>
    <property type="project" value="GO_Central"/>
</dbReference>
<dbReference type="GO" id="GO:0019843">
    <property type="term" value="F:rRNA binding"/>
    <property type="evidence" value="ECO:0007669"/>
    <property type="project" value="UniProtKB-UniRule"/>
</dbReference>
<dbReference type="GO" id="GO:0003735">
    <property type="term" value="F:structural constituent of ribosome"/>
    <property type="evidence" value="ECO:0000318"/>
    <property type="project" value="GO_Central"/>
</dbReference>
<dbReference type="GO" id="GO:0006412">
    <property type="term" value="P:translation"/>
    <property type="evidence" value="ECO:0007669"/>
    <property type="project" value="UniProtKB-UniRule"/>
</dbReference>
<dbReference type="FunFam" id="3.100.10.10:FF:000004">
    <property type="entry name" value="50S ribosomal protein L15"/>
    <property type="match status" value="1"/>
</dbReference>
<dbReference type="Gene3D" id="3.100.10.10">
    <property type="match status" value="1"/>
</dbReference>
<dbReference type="HAMAP" id="MF_01341">
    <property type="entry name" value="Ribosomal_uL15"/>
    <property type="match status" value="1"/>
</dbReference>
<dbReference type="InterPro" id="IPR030878">
    <property type="entry name" value="Ribosomal_uL15"/>
</dbReference>
<dbReference type="InterPro" id="IPR021131">
    <property type="entry name" value="Ribosomal_uL15/eL18"/>
</dbReference>
<dbReference type="InterPro" id="IPR036227">
    <property type="entry name" value="Ribosomal_uL15/eL18_sf"/>
</dbReference>
<dbReference type="InterPro" id="IPR005749">
    <property type="entry name" value="Ribosomal_uL15_bac-type"/>
</dbReference>
<dbReference type="InterPro" id="IPR001196">
    <property type="entry name" value="Ribosomal_uL15_CS"/>
</dbReference>
<dbReference type="NCBIfam" id="TIGR01071">
    <property type="entry name" value="rplO_bact"/>
    <property type="match status" value="1"/>
</dbReference>
<dbReference type="PANTHER" id="PTHR12934">
    <property type="entry name" value="50S RIBOSOMAL PROTEIN L15"/>
    <property type="match status" value="1"/>
</dbReference>
<dbReference type="PANTHER" id="PTHR12934:SF11">
    <property type="entry name" value="LARGE RIBOSOMAL SUBUNIT PROTEIN UL15M"/>
    <property type="match status" value="1"/>
</dbReference>
<dbReference type="Pfam" id="PF00828">
    <property type="entry name" value="Ribosomal_L27A"/>
    <property type="match status" value="1"/>
</dbReference>
<dbReference type="SUPFAM" id="SSF52080">
    <property type="entry name" value="Ribosomal proteins L15p and L18e"/>
    <property type="match status" value="1"/>
</dbReference>
<dbReference type="PROSITE" id="PS00475">
    <property type="entry name" value="RIBOSOMAL_L15"/>
    <property type="match status" value="1"/>
</dbReference>